<comment type="similarity">
    <text evidence="1">Belongs to the bacterial ribosomal protein bL35 family.</text>
</comment>
<proteinExistence type="inferred from homology"/>
<feature type="chain" id="PRO_1000050759" description="Large ribosomal subunit protein bL35">
    <location>
        <begin position="1"/>
        <end position="64"/>
    </location>
</feature>
<feature type="region of interest" description="Disordered" evidence="2">
    <location>
        <begin position="1"/>
        <end position="27"/>
    </location>
</feature>
<feature type="compositionally biased region" description="Basic residues" evidence="2">
    <location>
        <begin position="1"/>
        <end position="15"/>
    </location>
</feature>
<gene>
    <name evidence="1" type="primary">rpmI</name>
    <name type="ordered locus">SACE_5280</name>
</gene>
<keyword id="KW-1185">Reference proteome</keyword>
<keyword id="KW-0687">Ribonucleoprotein</keyword>
<keyword id="KW-0689">Ribosomal protein</keyword>
<name>RL35_SACEN</name>
<sequence>MPKNKTHSGTAKRFRVTGSGKLRREQAGRRHILEKKSSRVTRRLEGTEAVAKADVKRINKLLGR</sequence>
<evidence type="ECO:0000255" key="1">
    <source>
        <dbReference type="HAMAP-Rule" id="MF_00514"/>
    </source>
</evidence>
<evidence type="ECO:0000256" key="2">
    <source>
        <dbReference type="SAM" id="MobiDB-lite"/>
    </source>
</evidence>
<evidence type="ECO:0000305" key="3"/>
<organism>
    <name type="scientific">Saccharopolyspora erythraea (strain ATCC 11635 / DSM 40517 / JCM 4748 / NBRC 13426 / NCIMB 8594 / NRRL 2338)</name>
    <dbReference type="NCBI Taxonomy" id="405948"/>
    <lineage>
        <taxon>Bacteria</taxon>
        <taxon>Bacillati</taxon>
        <taxon>Actinomycetota</taxon>
        <taxon>Actinomycetes</taxon>
        <taxon>Pseudonocardiales</taxon>
        <taxon>Pseudonocardiaceae</taxon>
        <taxon>Saccharopolyspora</taxon>
    </lineage>
</organism>
<accession>A4FKE4</accession>
<protein>
    <recommendedName>
        <fullName evidence="1">Large ribosomal subunit protein bL35</fullName>
    </recommendedName>
    <alternativeName>
        <fullName evidence="3">50S ribosomal protein L35</fullName>
    </alternativeName>
</protein>
<dbReference type="EMBL" id="AM420293">
    <property type="protein sequence ID" value="CAM04519.1"/>
    <property type="molecule type" value="Genomic_DNA"/>
</dbReference>
<dbReference type="RefSeq" id="WP_009951172.1">
    <property type="nucleotide sequence ID" value="NC_009142.1"/>
</dbReference>
<dbReference type="SMR" id="A4FKE4"/>
<dbReference type="STRING" id="405948.SACE_5280"/>
<dbReference type="KEGG" id="sen:SACE_5280"/>
<dbReference type="eggNOG" id="COG0291">
    <property type="taxonomic scope" value="Bacteria"/>
</dbReference>
<dbReference type="HOGENOM" id="CLU_169643_4_2_11"/>
<dbReference type="OrthoDB" id="9804851at2"/>
<dbReference type="Proteomes" id="UP000006728">
    <property type="component" value="Chromosome"/>
</dbReference>
<dbReference type="GO" id="GO:0022625">
    <property type="term" value="C:cytosolic large ribosomal subunit"/>
    <property type="evidence" value="ECO:0007669"/>
    <property type="project" value="TreeGrafter"/>
</dbReference>
<dbReference type="GO" id="GO:0003735">
    <property type="term" value="F:structural constituent of ribosome"/>
    <property type="evidence" value="ECO:0007669"/>
    <property type="project" value="InterPro"/>
</dbReference>
<dbReference type="GO" id="GO:0006412">
    <property type="term" value="P:translation"/>
    <property type="evidence" value="ECO:0007669"/>
    <property type="project" value="UniProtKB-UniRule"/>
</dbReference>
<dbReference type="FunFam" id="4.10.410.60:FF:000001">
    <property type="entry name" value="50S ribosomal protein L35"/>
    <property type="match status" value="1"/>
</dbReference>
<dbReference type="Gene3D" id="4.10.410.60">
    <property type="match status" value="1"/>
</dbReference>
<dbReference type="HAMAP" id="MF_00514">
    <property type="entry name" value="Ribosomal_bL35"/>
    <property type="match status" value="1"/>
</dbReference>
<dbReference type="InterPro" id="IPR001706">
    <property type="entry name" value="Ribosomal_bL35"/>
</dbReference>
<dbReference type="InterPro" id="IPR021137">
    <property type="entry name" value="Ribosomal_bL35-like"/>
</dbReference>
<dbReference type="InterPro" id="IPR037229">
    <property type="entry name" value="Ribosomal_bL35_sf"/>
</dbReference>
<dbReference type="NCBIfam" id="TIGR00001">
    <property type="entry name" value="rpmI_bact"/>
    <property type="match status" value="1"/>
</dbReference>
<dbReference type="PANTHER" id="PTHR33343">
    <property type="entry name" value="54S RIBOSOMAL PROTEIN BL35M"/>
    <property type="match status" value="1"/>
</dbReference>
<dbReference type="PANTHER" id="PTHR33343:SF1">
    <property type="entry name" value="LARGE RIBOSOMAL SUBUNIT PROTEIN BL35M"/>
    <property type="match status" value="1"/>
</dbReference>
<dbReference type="Pfam" id="PF01632">
    <property type="entry name" value="Ribosomal_L35p"/>
    <property type="match status" value="1"/>
</dbReference>
<dbReference type="PRINTS" id="PR00064">
    <property type="entry name" value="RIBOSOMALL35"/>
</dbReference>
<dbReference type="SUPFAM" id="SSF143034">
    <property type="entry name" value="L35p-like"/>
    <property type="match status" value="1"/>
</dbReference>
<reference key="1">
    <citation type="journal article" date="2007" name="Nat. Biotechnol.">
        <title>Complete genome sequence of the erythromycin-producing bacterium Saccharopolyspora erythraea NRRL23338.</title>
        <authorList>
            <person name="Oliynyk M."/>
            <person name="Samborskyy M."/>
            <person name="Lester J.B."/>
            <person name="Mironenko T."/>
            <person name="Scott N."/>
            <person name="Dickens S."/>
            <person name="Haydock S.F."/>
            <person name="Leadlay P.F."/>
        </authorList>
    </citation>
    <scope>NUCLEOTIDE SEQUENCE [LARGE SCALE GENOMIC DNA]</scope>
    <source>
        <strain>ATCC 11635 / DSM 40517 / JCM 4748 / NBRC 13426 / NCIMB 8594 / NRRL 2338</strain>
    </source>
</reference>